<comment type="function">
    <text evidence="1">Catalyzes a mechanistically unusual reaction, the ATP-dependent insertion of CO2 between the N7 and N8 nitrogen atoms of 7,8-diaminopelargonic acid (DAPA, also called 7,8-diammoniononanoate) to form a ureido ring.</text>
</comment>
<comment type="catalytic activity">
    <reaction evidence="1">
        <text>(7R,8S)-7,8-diammoniononanoate + CO2 + ATP = (4R,5S)-dethiobiotin + ADP + phosphate + 3 H(+)</text>
        <dbReference type="Rhea" id="RHEA:15805"/>
        <dbReference type="ChEBI" id="CHEBI:15378"/>
        <dbReference type="ChEBI" id="CHEBI:16526"/>
        <dbReference type="ChEBI" id="CHEBI:30616"/>
        <dbReference type="ChEBI" id="CHEBI:43474"/>
        <dbReference type="ChEBI" id="CHEBI:149469"/>
        <dbReference type="ChEBI" id="CHEBI:149473"/>
        <dbReference type="ChEBI" id="CHEBI:456216"/>
        <dbReference type="EC" id="6.3.3.3"/>
    </reaction>
</comment>
<comment type="cofactor">
    <cofactor evidence="1">
        <name>Mg(2+)</name>
        <dbReference type="ChEBI" id="CHEBI:18420"/>
    </cofactor>
</comment>
<comment type="pathway">
    <text evidence="1">Cofactor biosynthesis; biotin biosynthesis; biotin from 7,8-diaminononanoate: step 1/2.</text>
</comment>
<comment type="subunit">
    <text evidence="1">Homodimer.</text>
</comment>
<comment type="subcellular location">
    <subcellularLocation>
        <location evidence="1">Cytoplasm</location>
    </subcellularLocation>
</comment>
<comment type="similarity">
    <text evidence="1">Belongs to the dethiobiotin synthetase family.</text>
</comment>
<dbReference type="EC" id="6.3.3.3" evidence="1"/>
<dbReference type="EMBL" id="AE007870">
    <property type="protein sequence ID" value="AAK89426.1"/>
    <property type="molecule type" value="Genomic_DNA"/>
</dbReference>
<dbReference type="PIR" id="AC3048">
    <property type="entry name" value="AC3048"/>
</dbReference>
<dbReference type="PIR" id="H98237">
    <property type="entry name" value="H98237"/>
</dbReference>
<dbReference type="RefSeq" id="NP_356641.1">
    <property type="nucleotide sequence ID" value="NC_003063.2"/>
</dbReference>
<dbReference type="RefSeq" id="WP_010973493.1">
    <property type="nucleotide sequence ID" value="NC_003063.2"/>
</dbReference>
<dbReference type="SMR" id="Q8U8T9"/>
<dbReference type="STRING" id="176299.Atu3999"/>
<dbReference type="EnsemblBacteria" id="AAK89426">
    <property type="protein sequence ID" value="AAK89426"/>
    <property type="gene ID" value="Atu3999"/>
</dbReference>
<dbReference type="GeneID" id="1135873"/>
<dbReference type="KEGG" id="atu:Atu3999"/>
<dbReference type="PATRIC" id="fig|176299.10.peg.3818"/>
<dbReference type="eggNOG" id="COG0132">
    <property type="taxonomic scope" value="Bacteria"/>
</dbReference>
<dbReference type="HOGENOM" id="CLU_072551_2_0_5"/>
<dbReference type="OrthoDB" id="9802097at2"/>
<dbReference type="PhylomeDB" id="Q8U8T9"/>
<dbReference type="BioCyc" id="AGRO:ATU3999-MONOMER"/>
<dbReference type="UniPathway" id="UPA00078">
    <property type="reaction ID" value="UER00161"/>
</dbReference>
<dbReference type="Proteomes" id="UP000000813">
    <property type="component" value="Chromosome linear"/>
</dbReference>
<dbReference type="GO" id="GO:0005829">
    <property type="term" value="C:cytosol"/>
    <property type="evidence" value="ECO:0007669"/>
    <property type="project" value="TreeGrafter"/>
</dbReference>
<dbReference type="GO" id="GO:0005524">
    <property type="term" value="F:ATP binding"/>
    <property type="evidence" value="ECO:0007669"/>
    <property type="project" value="UniProtKB-UniRule"/>
</dbReference>
<dbReference type="GO" id="GO:0004141">
    <property type="term" value="F:dethiobiotin synthase activity"/>
    <property type="evidence" value="ECO:0007669"/>
    <property type="project" value="UniProtKB-UniRule"/>
</dbReference>
<dbReference type="GO" id="GO:0000287">
    <property type="term" value="F:magnesium ion binding"/>
    <property type="evidence" value="ECO:0007669"/>
    <property type="project" value="UniProtKB-UniRule"/>
</dbReference>
<dbReference type="GO" id="GO:0009102">
    <property type="term" value="P:biotin biosynthetic process"/>
    <property type="evidence" value="ECO:0007669"/>
    <property type="project" value="UniProtKB-UniRule"/>
</dbReference>
<dbReference type="CDD" id="cd03109">
    <property type="entry name" value="DTBS"/>
    <property type="match status" value="1"/>
</dbReference>
<dbReference type="Gene3D" id="3.40.50.300">
    <property type="entry name" value="P-loop containing nucleotide triphosphate hydrolases"/>
    <property type="match status" value="1"/>
</dbReference>
<dbReference type="HAMAP" id="MF_00336">
    <property type="entry name" value="BioD"/>
    <property type="match status" value="1"/>
</dbReference>
<dbReference type="InterPro" id="IPR004472">
    <property type="entry name" value="DTB_synth_BioD"/>
</dbReference>
<dbReference type="InterPro" id="IPR027417">
    <property type="entry name" value="P-loop_NTPase"/>
</dbReference>
<dbReference type="NCBIfam" id="TIGR00347">
    <property type="entry name" value="bioD"/>
    <property type="match status" value="1"/>
</dbReference>
<dbReference type="PANTHER" id="PTHR43210:SF2">
    <property type="entry name" value="ATP-DEPENDENT DETHIOBIOTIN SYNTHETASE BIOD 2"/>
    <property type="match status" value="1"/>
</dbReference>
<dbReference type="PANTHER" id="PTHR43210">
    <property type="entry name" value="DETHIOBIOTIN SYNTHETASE"/>
    <property type="match status" value="1"/>
</dbReference>
<dbReference type="Pfam" id="PF13500">
    <property type="entry name" value="AAA_26"/>
    <property type="match status" value="1"/>
</dbReference>
<dbReference type="PIRSF" id="PIRSF006755">
    <property type="entry name" value="DTB_synth"/>
    <property type="match status" value="1"/>
</dbReference>
<dbReference type="SUPFAM" id="SSF52540">
    <property type="entry name" value="P-loop containing nucleoside triphosphate hydrolases"/>
    <property type="match status" value="1"/>
</dbReference>
<protein>
    <recommendedName>
        <fullName evidence="1">ATP-dependent dethiobiotin synthetase BioD</fullName>
        <ecNumber evidence="1">6.3.3.3</ecNumber>
    </recommendedName>
    <alternativeName>
        <fullName evidence="1">DTB synthetase</fullName>
        <shortName evidence="1">DTBS</shortName>
    </alternativeName>
    <alternativeName>
        <fullName evidence="1">Dethiobiotin synthase</fullName>
    </alternativeName>
</protein>
<keyword id="KW-0067">ATP-binding</keyword>
<keyword id="KW-0093">Biotin biosynthesis</keyword>
<keyword id="KW-0963">Cytoplasm</keyword>
<keyword id="KW-0436">Ligase</keyword>
<keyword id="KW-0460">Magnesium</keyword>
<keyword id="KW-0479">Metal-binding</keyword>
<keyword id="KW-0547">Nucleotide-binding</keyword>
<keyword id="KW-1185">Reference proteome</keyword>
<evidence type="ECO:0000255" key="1">
    <source>
        <dbReference type="HAMAP-Rule" id="MF_00336"/>
    </source>
</evidence>
<accession>Q8U8T9</accession>
<gene>
    <name evidence="1" type="primary">bioD</name>
    <name type="ordered locus">Atu3999</name>
    <name type="ORF">AGR_L_1705</name>
</gene>
<feature type="chain" id="PRO_0000187944" description="ATP-dependent dethiobiotin synthetase BioD">
    <location>
        <begin position="1"/>
        <end position="212"/>
    </location>
</feature>
<feature type="active site" evidence="1">
    <location>
        <position position="33"/>
    </location>
</feature>
<feature type="binding site" evidence="1">
    <location>
        <begin position="13"/>
        <end position="18"/>
    </location>
    <ligand>
        <name>ATP</name>
        <dbReference type="ChEBI" id="CHEBI:30616"/>
    </ligand>
</feature>
<feature type="binding site" evidence="1">
    <location>
        <position position="17"/>
    </location>
    <ligand>
        <name>Mg(2+)</name>
        <dbReference type="ChEBI" id="CHEBI:18420"/>
    </ligand>
</feature>
<feature type="binding site" evidence="1">
    <location>
        <position position="37"/>
    </location>
    <ligand>
        <name>substrate</name>
    </ligand>
</feature>
<feature type="binding site" evidence="1">
    <location>
        <begin position="100"/>
        <end position="103"/>
    </location>
    <ligand>
        <name>ATP</name>
        <dbReference type="ChEBI" id="CHEBI:30616"/>
    </ligand>
</feature>
<feature type="binding site" evidence="1">
    <location>
        <position position="100"/>
    </location>
    <ligand>
        <name>Mg(2+)</name>
        <dbReference type="ChEBI" id="CHEBI:18420"/>
    </ligand>
</feature>
<feature type="binding site" evidence="1">
    <location>
        <begin position="184"/>
        <end position="186"/>
    </location>
    <ligand>
        <name>ATP</name>
        <dbReference type="ChEBI" id="CHEBI:30616"/>
    </ligand>
</feature>
<proteinExistence type="inferred from homology"/>
<sequence length="212" mass="23115">MSLRFVISGTDTGIGKTVFAAALTHALEAHYWKPVQSGLEEETDSQTVARLAGASHARILPEAYRLKTPASPHLSARLDNVSIDPARLLPPRPDGPLVIEGAGGLLVPLTDRLLFADIFALWQIPLILCARTALGTINHTLLSLEALRHRAIPVQGVVFIGDEDRENERVITDIGAVRRLGRLPRLPELTPEALHQAFAQHFNLADFLEVPA</sequence>
<reference key="1">
    <citation type="journal article" date="2001" name="Science">
        <title>The genome of the natural genetic engineer Agrobacterium tumefaciens C58.</title>
        <authorList>
            <person name="Wood D.W."/>
            <person name="Setubal J.C."/>
            <person name="Kaul R."/>
            <person name="Monks D.E."/>
            <person name="Kitajima J.P."/>
            <person name="Okura V.K."/>
            <person name="Zhou Y."/>
            <person name="Chen L."/>
            <person name="Wood G.E."/>
            <person name="Almeida N.F. Jr."/>
            <person name="Woo L."/>
            <person name="Chen Y."/>
            <person name="Paulsen I.T."/>
            <person name="Eisen J.A."/>
            <person name="Karp P.D."/>
            <person name="Bovee D. Sr."/>
            <person name="Chapman P."/>
            <person name="Clendenning J."/>
            <person name="Deatherage G."/>
            <person name="Gillet W."/>
            <person name="Grant C."/>
            <person name="Kutyavin T."/>
            <person name="Levy R."/>
            <person name="Li M.-J."/>
            <person name="McClelland E."/>
            <person name="Palmieri A."/>
            <person name="Raymond C."/>
            <person name="Rouse G."/>
            <person name="Saenphimmachak C."/>
            <person name="Wu Z."/>
            <person name="Romero P."/>
            <person name="Gordon D."/>
            <person name="Zhang S."/>
            <person name="Yoo H."/>
            <person name="Tao Y."/>
            <person name="Biddle P."/>
            <person name="Jung M."/>
            <person name="Krespan W."/>
            <person name="Perry M."/>
            <person name="Gordon-Kamm B."/>
            <person name="Liao L."/>
            <person name="Kim S."/>
            <person name="Hendrick C."/>
            <person name="Zhao Z.-Y."/>
            <person name="Dolan M."/>
            <person name="Chumley F."/>
            <person name="Tingey S.V."/>
            <person name="Tomb J.-F."/>
            <person name="Gordon M.P."/>
            <person name="Olson M.V."/>
            <person name="Nester E.W."/>
        </authorList>
    </citation>
    <scope>NUCLEOTIDE SEQUENCE [LARGE SCALE GENOMIC DNA]</scope>
    <source>
        <strain>C58 / ATCC 33970</strain>
    </source>
</reference>
<reference key="2">
    <citation type="journal article" date="2001" name="Science">
        <title>Genome sequence of the plant pathogen and biotechnology agent Agrobacterium tumefaciens C58.</title>
        <authorList>
            <person name="Goodner B."/>
            <person name="Hinkle G."/>
            <person name="Gattung S."/>
            <person name="Miller N."/>
            <person name="Blanchard M."/>
            <person name="Qurollo B."/>
            <person name="Goldman B.S."/>
            <person name="Cao Y."/>
            <person name="Askenazi M."/>
            <person name="Halling C."/>
            <person name="Mullin L."/>
            <person name="Houmiel K."/>
            <person name="Gordon J."/>
            <person name="Vaudin M."/>
            <person name="Iartchouk O."/>
            <person name="Epp A."/>
            <person name="Liu F."/>
            <person name="Wollam C."/>
            <person name="Allinger M."/>
            <person name="Doughty D."/>
            <person name="Scott C."/>
            <person name="Lappas C."/>
            <person name="Markelz B."/>
            <person name="Flanagan C."/>
            <person name="Crowell C."/>
            <person name="Gurson J."/>
            <person name="Lomo C."/>
            <person name="Sear C."/>
            <person name="Strub G."/>
            <person name="Cielo C."/>
            <person name="Slater S."/>
        </authorList>
    </citation>
    <scope>NUCLEOTIDE SEQUENCE [LARGE SCALE GENOMIC DNA]</scope>
    <source>
        <strain>C58 / ATCC 33970</strain>
    </source>
</reference>
<organism>
    <name type="scientific">Agrobacterium fabrum (strain C58 / ATCC 33970)</name>
    <name type="common">Agrobacterium tumefaciens (strain C58)</name>
    <dbReference type="NCBI Taxonomy" id="176299"/>
    <lineage>
        <taxon>Bacteria</taxon>
        <taxon>Pseudomonadati</taxon>
        <taxon>Pseudomonadota</taxon>
        <taxon>Alphaproteobacteria</taxon>
        <taxon>Hyphomicrobiales</taxon>
        <taxon>Rhizobiaceae</taxon>
        <taxon>Rhizobium/Agrobacterium group</taxon>
        <taxon>Agrobacterium</taxon>
        <taxon>Agrobacterium tumefaciens complex</taxon>
    </lineage>
</organism>
<name>BIOD_AGRFC</name>